<dbReference type="EC" id="4.3.2.10" evidence="1"/>
<dbReference type="EMBL" id="CP001146">
    <property type="protein sequence ID" value="ACI19450.1"/>
    <property type="molecule type" value="Genomic_DNA"/>
</dbReference>
<dbReference type="RefSeq" id="WP_012548082.1">
    <property type="nucleotide sequence ID" value="NC_011297.1"/>
</dbReference>
<dbReference type="SMR" id="B5YE90"/>
<dbReference type="STRING" id="309799.DICTH_0998"/>
<dbReference type="PaxDb" id="309799-DICTH_0998"/>
<dbReference type="KEGG" id="dth:DICTH_0998"/>
<dbReference type="eggNOG" id="COG0107">
    <property type="taxonomic scope" value="Bacteria"/>
</dbReference>
<dbReference type="HOGENOM" id="CLU_048577_4_0_0"/>
<dbReference type="OrthoDB" id="9807749at2"/>
<dbReference type="UniPathway" id="UPA00031">
    <property type="reaction ID" value="UER00010"/>
</dbReference>
<dbReference type="Proteomes" id="UP000001733">
    <property type="component" value="Chromosome"/>
</dbReference>
<dbReference type="GO" id="GO:0005737">
    <property type="term" value="C:cytoplasm"/>
    <property type="evidence" value="ECO:0007669"/>
    <property type="project" value="UniProtKB-SubCell"/>
</dbReference>
<dbReference type="GO" id="GO:0000107">
    <property type="term" value="F:imidazoleglycerol-phosphate synthase activity"/>
    <property type="evidence" value="ECO:0007669"/>
    <property type="project" value="UniProtKB-UniRule"/>
</dbReference>
<dbReference type="GO" id="GO:0016829">
    <property type="term" value="F:lyase activity"/>
    <property type="evidence" value="ECO:0007669"/>
    <property type="project" value="UniProtKB-KW"/>
</dbReference>
<dbReference type="GO" id="GO:0000105">
    <property type="term" value="P:L-histidine biosynthetic process"/>
    <property type="evidence" value="ECO:0007669"/>
    <property type="project" value="UniProtKB-UniRule"/>
</dbReference>
<dbReference type="CDD" id="cd04731">
    <property type="entry name" value="HisF"/>
    <property type="match status" value="1"/>
</dbReference>
<dbReference type="FunFam" id="3.20.20.70:FF:000006">
    <property type="entry name" value="Imidazole glycerol phosphate synthase subunit HisF"/>
    <property type="match status" value="1"/>
</dbReference>
<dbReference type="Gene3D" id="3.20.20.70">
    <property type="entry name" value="Aldolase class I"/>
    <property type="match status" value="1"/>
</dbReference>
<dbReference type="HAMAP" id="MF_01013">
    <property type="entry name" value="HisF"/>
    <property type="match status" value="1"/>
</dbReference>
<dbReference type="InterPro" id="IPR013785">
    <property type="entry name" value="Aldolase_TIM"/>
</dbReference>
<dbReference type="InterPro" id="IPR006062">
    <property type="entry name" value="His_biosynth"/>
</dbReference>
<dbReference type="InterPro" id="IPR004651">
    <property type="entry name" value="HisF"/>
</dbReference>
<dbReference type="InterPro" id="IPR050064">
    <property type="entry name" value="IGPS_HisA/HisF"/>
</dbReference>
<dbReference type="InterPro" id="IPR011060">
    <property type="entry name" value="RibuloseP-bd_barrel"/>
</dbReference>
<dbReference type="NCBIfam" id="TIGR00735">
    <property type="entry name" value="hisF"/>
    <property type="match status" value="1"/>
</dbReference>
<dbReference type="PANTHER" id="PTHR21235:SF2">
    <property type="entry name" value="IMIDAZOLE GLYCEROL PHOSPHATE SYNTHASE HISHF"/>
    <property type="match status" value="1"/>
</dbReference>
<dbReference type="PANTHER" id="PTHR21235">
    <property type="entry name" value="IMIDAZOLE GLYCEROL PHOSPHATE SYNTHASE SUBUNIT HISF/H IGP SYNTHASE SUBUNIT HISF/H"/>
    <property type="match status" value="1"/>
</dbReference>
<dbReference type="Pfam" id="PF00977">
    <property type="entry name" value="His_biosynth"/>
    <property type="match status" value="1"/>
</dbReference>
<dbReference type="SUPFAM" id="SSF51366">
    <property type="entry name" value="Ribulose-phoshate binding barrel"/>
    <property type="match status" value="1"/>
</dbReference>
<accession>B5YE90</accession>
<sequence>MLAKRIIPCLDTIGRNVVKGTSFVNIRIVGDAKELARRYEREGADEIVLLDITASEEGRGTFVDVVTEVASELFVPLTVGGGIKNIEDVRKLLKAGADKVSINTAAVENPDIINQIASEFGSQCLVVAIDVKKRGKKSWEVYVKGGKVPTGIDFKDWIVEVEKRGAGEILLTSIDADGHLSGYDYELLECALNYSNLPLIASGGAGSLEDLYKALKIGVDAVLAASIFHFGTYTIPEVKKYLKEKGIWVRLD</sequence>
<name>HIS6_DICT6</name>
<reference key="1">
    <citation type="journal article" date="2014" name="Genome Announc.">
        <title>Complete Genome Sequence of the Extreme Thermophile Dictyoglomus thermophilum H-6-12.</title>
        <authorList>
            <person name="Coil D.A."/>
            <person name="Badger J.H."/>
            <person name="Forberger H.C."/>
            <person name="Riggs F."/>
            <person name="Madupu R."/>
            <person name="Fedorova N."/>
            <person name="Ward N."/>
            <person name="Robb F.T."/>
            <person name="Eisen J.A."/>
        </authorList>
    </citation>
    <scope>NUCLEOTIDE SEQUENCE [LARGE SCALE GENOMIC DNA]</scope>
    <source>
        <strain>ATCC 35947 / DSM 3960 / H-6-12</strain>
    </source>
</reference>
<keyword id="KW-0028">Amino-acid biosynthesis</keyword>
<keyword id="KW-0963">Cytoplasm</keyword>
<keyword id="KW-0368">Histidine biosynthesis</keyword>
<keyword id="KW-0456">Lyase</keyword>
<protein>
    <recommendedName>
        <fullName evidence="1">Imidazole glycerol phosphate synthase subunit HisF</fullName>
        <ecNumber evidence="1">4.3.2.10</ecNumber>
    </recommendedName>
    <alternativeName>
        <fullName evidence="1">IGP synthase cyclase subunit</fullName>
    </alternativeName>
    <alternativeName>
        <fullName evidence="1">IGP synthase subunit HisF</fullName>
    </alternativeName>
    <alternativeName>
        <fullName evidence="1">ImGP synthase subunit HisF</fullName>
        <shortName evidence="1">IGPS subunit HisF</shortName>
    </alternativeName>
</protein>
<organism>
    <name type="scientific">Dictyoglomus thermophilum (strain ATCC 35947 / DSM 3960 / H-6-12)</name>
    <dbReference type="NCBI Taxonomy" id="309799"/>
    <lineage>
        <taxon>Bacteria</taxon>
        <taxon>Pseudomonadati</taxon>
        <taxon>Dictyoglomota</taxon>
        <taxon>Dictyoglomia</taxon>
        <taxon>Dictyoglomales</taxon>
        <taxon>Dictyoglomaceae</taxon>
        <taxon>Dictyoglomus</taxon>
    </lineage>
</organism>
<evidence type="ECO:0000255" key="1">
    <source>
        <dbReference type="HAMAP-Rule" id="MF_01013"/>
    </source>
</evidence>
<proteinExistence type="inferred from homology"/>
<feature type="chain" id="PRO_1000134991" description="Imidazole glycerol phosphate synthase subunit HisF">
    <location>
        <begin position="1"/>
        <end position="252"/>
    </location>
</feature>
<feature type="active site" evidence="1">
    <location>
        <position position="11"/>
    </location>
</feature>
<feature type="active site" evidence="1">
    <location>
        <position position="130"/>
    </location>
</feature>
<comment type="function">
    <text evidence="1">IGPS catalyzes the conversion of PRFAR and glutamine to IGP, AICAR and glutamate. The HisF subunit catalyzes the cyclization activity that produces IGP and AICAR from PRFAR using the ammonia provided by the HisH subunit.</text>
</comment>
<comment type="catalytic activity">
    <reaction evidence="1">
        <text>5-[(5-phospho-1-deoxy-D-ribulos-1-ylimino)methylamino]-1-(5-phospho-beta-D-ribosyl)imidazole-4-carboxamide + L-glutamine = D-erythro-1-(imidazol-4-yl)glycerol 3-phosphate + 5-amino-1-(5-phospho-beta-D-ribosyl)imidazole-4-carboxamide + L-glutamate + H(+)</text>
        <dbReference type="Rhea" id="RHEA:24793"/>
        <dbReference type="ChEBI" id="CHEBI:15378"/>
        <dbReference type="ChEBI" id="CHEBI:29985"/>
        <dbReference type="ChEBI" id="CHEBI:58278"/>
        <dbReference type="ChEBI" id="CHEBI:58359"/>
        <dbReference type="ChEBI" id="CHEBI:58475"/>
        <dbReference type="ChEBI" id="CHEBI:58525"/>
        <dbReference type="EC" id="4.3.2.10"/>
    </reaction>
</comment>
<comment type="pathway">
    <text evidence="1">Amino-acid biosynthesis; L-histidine biosynthesis; L-histidine from 5-phospho-alpha-D-ribose 1-diphosphate: step 5/9.</text>
</comment>
<comment type="subunit">
    <text evidence="1">Heterodimer of HisH and HisF.</text>
</comment>
<comment type="subcellular location">
    <subcellularLocation>
        <location evidence="1">Cytoplasm</location>
    </subcellularLocation>
</comment>
<comment type="similarity">
    <text evidence="1">Belongs to the HisA/HisF family.</text>
</comment>
<gene>
    <name evidence="1" type="primary">hisF</name>
    <name type="ordered locus">DICTH_0998</name>
</gene>